<comment type="function">
    <text evidence="1">Anaerobic nitric oxide reductase; uses NADH to detoxify nitric oxide (NO), protecting several 4Fe-4S NO-sensitive enzymes. Has at least 2 reductase partners, only one of which (NorW, flavorubredoxin reductase) has been identified. NO probably binds to the di-iron center; electrons enter from the NorW at rubredoxin and are transferred sequentially to the FMN center and the di-iron center. Also able to function as an aerobic oxygen reductase.</text>
</comment>
<comment type="cofactor">
    <cofactor evidence="1">
        <name>Fe cation</name>
        <dbReference type="ChEBI" id="CHEBI:24875"/>
    </cofactor>
    <text evidence="1">Binds 3 Fe cations per monomer.</text>
</comment>
<comment type="cofactor">
    <cofactor evidence="1">
        <name>FMN</name>
        <dbReference type="ChEBI" id="CHEBI:58210"/>
    </cofactor>
    <text evidence="1">Binds 1 FMN per monomer.</text>
</comment>
<comment type="pathway">
    <text evidence="1">Nitrogen metabolism; nitric oxide reduction.</text>
</comment>
<comment type="subunit">
    <text evidence="1">Homotetramer.</text>
</comment>
<comment type="subcellular location">
    <subcellularLocation>
        <location evidence="1">Cytoplasm</location>
    </subcellularLocation>
</comment>
<comment type="similarity">
    <text evidence="1">In the N-terminal section; belongs to the zinc metallo-hydrolase group 3 family.</text>
</comment>
<evidence type="ECO:0000255" key="1">
    <source>
        <dbReference type="HAMAP-Rule" id="MF_01312"/>
    </source>
</evidence>
<gene>
    <name evidence="1" type="primary">norV</name>
    <name evidence="1" type="synonym">flrD</name>
    <name type="ordered locus">SF2733</name>
    <name type="ordered locus">S2924</name>
</gene>
<proteinExistence type="inferred from homology"/>
<protein>
    <recommendedName>
        <fullName evidence="1">Anaerobic nitric oxide reductase flavorubredoxin</fullName>
        <shortName evidence="1">FlRd</shortName>
        <shortName evidence="1">FlavoRb</shortName>
    </recommendedName>
</protein>
<accession>P59405</accession>
<keyword id="KW-0963">Cytoplasm</keyword>
<keyword id="KW-0249">Electron transport</keyword>
<keyword id="KW-0285">Flavoprotein</keyword>
<keyword id="KW-0288">FMN</keyword>
<keyword id="KW-0408">Iron</keyword>
<keyword id="KW-0479">Metal-binding</keyword>
<keyword id="KW-0560">Oxidoreductase</keyword>
<keyword id="KW-1185">Reference proteome</keyword>
<keyword id="KW-0813">Transport</keyword>
<reference key="1">
    <citation type="journal article" date="2002" name="Nucleic Acids Res.">
        <title>Genome sequence of Shigella flexneri 2a: insights into pathogenicity through comparison with genomes of Escherichia coli K12 and O157.</title>
        <authorList>
            <person name="Jin Q."/>
            <person name="Yuan Z."/>
            <person name="Xu J."/>
            <person name="Wang Y."/>
            <person name="Shen Y."/>
            <person name="Lu W."/>
            <person name="Wang J."/>
            <person name="Liu H."/>
            <person name="Yang J."/>
            <person name="Yang F."/>
            <person name="Zhang X."/>
            <person name="Zhang J."/>
            <person name="Yang G."/>
            <person name="Wu H."/>
            <person name="Qu D."/>
            <person name="Dong J."/>
            <person name="Sun L."/>
            <person name="Xue Y."/>
            <person name="Zhao A."/>
            <person name="Gao Y."/>
            <person name="Zhu J."/>
            <person name="Kan B."/>
            <person name="Ding K."/>
            <person name="Chen S."/>
            <person name="Cheng H."/>
            <person name="Yao Z."/>
            <person name="He B."/>
            <person name="Chen R."/>
            <person name="Ma D."/>
            <person name="Qiang B."/>
            <person name="Wen Y."/>
            <person name="Hou Y."/>
            <person name="Yu J."/>
        </authorList>
    </citation>
    <scope>NUCLEOTIDE SEQUENCE [LARGE SCALE GENOMIC DNA]</scope>
    <source>
        <strain>301 / Serotype 2a</strain>
    </source>
</reference>
<reference key="2">
    <citation type="journal article" date="2003" name="Infect. Immun.">
        <title>Complete genome sequence and comparative genomics of Shigella flexneri serotype 2a strain 2457T.</title>
        <authorList>
            <person name="Wei J."/>
            <person name="Goldberg M.B."/>
            <person name="Burland V."/>
            <person name="Venkatesan M.M."/>
            <person name="Deng W."/>
            <person name="Fournier G."/>
            <person name="Mayhew G.F."/>
            <person name="Plunkett G. III"/>
            <person name="Rose D.J."/>
            <person name="Darling A."/>
            <person name="Mau B."/>
            <person name="Perna N.T."/>
            <person name="Payne S.M."/>
            <person name="Runyen-Janecky L.J."/>
            <person name="Zhou S."/>
            <person name="Schwartz D.C."/>
            <person name="Blattner F.R."/>
        </authorList>
    </citation>
    <scope>NUCLEOTIDE SEQUENCE [LARGE SCALE GENOMIC DNA]</scope>
    <source>
        <strain>ATCC 700930 / 2457T / Serotype 2a</strain>
    </source>
</reference>
<dbReference type="EMBL" id="AE005674">
    <property type="protein sequence ID" value="AAN44224.1"/>
    <property type="molecule type" value="Genomic_DNA"/>
</dbReference>
<dbReference type="EMBL" id="AE014073">
    <property type="protein sequence ID" value="AAP18050.1"/>
    <property type="molecule type" value="Genomic_DNA"/>
</dbReference>
<dbReference type="RefSeq" id="NP_708517.1">
    <property type="nucleotide sequence ID" value="NC_004337.2"/>
</dbReference>
<dbReference type="RefSeq" id="WP_000029605.1">
    <property type="nucleotide sequence ID" value="NZ_WPGW01000014.1"/>
</dbReference>
<dbReference type="SMR" id="P59405"/>
<dbReference type="STRING" id="198214.SF2733"/>
<dbReference type="PaxDb" id="198214-SF2733"/>
<dbReference type="GeneID" id="1025213"/>
<dbReference type="KEGG" id="sfl:SF2733"/>
<dbReference type="KEGG" id="sfx:S2924"/>
<dbReference type="PATRIC" id="fig|198214.7.peg.3254"/>
<dbReference type="HOGENOM" id="CLU_017490_0_1_6"/>
<dbReference type="UniPathway" id="UPA00638"/>
<dbReference type="Proteomes" id="UP000001006">
    <property type="component" value="Chromosome"/>
</dbReference>
<dbReference type="Proteomes" id="UP000002673">
    <property type="component" value="Chromosome"/>
</dbReference>
<dbReference type="GO" id="GO:0005737">
    <property type="term" value="C:cytoplasm"/>
    <property type="evidence" value="ECO:0007669"/>
    <property type="project" value="UniProtKB-SubCell"/>
</dbReference>
<dbReference type="GO" id="GO:0009055">
    <property type="term" value="F:electron transfer activity"/>
    <property type="evidence" value="ECO:0007669"/>
    <property type="project" value="UniProtKB-UniRule"/>
</dbReference>
<dbReference type="GO" id="GO:0010181">
    <property type="term" value="F:FMN binding"/>
    <property type="evidence" value="ECO:0007669"/>
    <property type="project" value="InterPro"/>
</dbReference>
<dbReference type="GO" id="GO:0005506">
    <property type="term" value="F:iron ion binding"/>
    <property type="evidence" value="ECO:0007669"/>
    <property type="project" value="InterPro"/>
</dbReference>
<dbReference type="GO" id="GO:0016966">
    <property type="term" value="F:nitric oxide reductase activity"/>
    <property type="evidence" value="ECO:0007669"/>
    <property type="project" value="InterPro"/>
</dbReference>
<dbReference type="CDD" id="cd07709">
    <property type="entry name" value="flavodiiron_proteins_MBL-fold"/>
    <property type="match status" value="1"/>
</dbReference>
<dbReference type="CDD" id="cd00730">
    <property type="entry name" value="rubredoxin"/>
    <property type="match status" value="1"/>
</dbReference>
<dbReference type="FunFam" id="2.20.28.10:FF:000010">
    <property type="entry name" value="Anaerobic nitric oxide reductase flavorubredoxin"/>
    <property type="match status" value="1"/>
</dbReference>
<dbReference type="FunFam" id="3.40.50.360:FF:000012">
    <property type="entry name" value="Anaerobic nitric oxide reductase flavorubredoxin"/>
    <property type="match status" value="1"/>
</dbReference>
<dbReference type="FunFam" id="3.60.15.10:FF:000009">
    <property type="entry name" value="Anaerobic nitric oxide reductase flavorubredoxin"/>
    <property type="match status" value="1"/>
</dbReference>
<dbReference type="Gene3D" id="2.20.28.10">
    <property type="match status" value="1"/>
</dbReference>
<dbReference type="Gene3D" id="3.40.50.360">
    <property type="match status" value="1"/>
</dbReference>
<dbReference type="Gene3D" id="3.60.15.10">
    <property type="entry name" value="Ribonuclease Z/Hydroxyacylglutathione hydrolase-like"/>
    <property type="match status" value="1"/>
</dbReference>
<dbReference type="HAMAP" id="MF_01312">
    <property type="entry name" value="NorV"/>
    <property type="match status" value="1"/>
</dbReference>
<dbReference type="InterPro" id="IPR023957">
    <property type="entry name" value="Anaer_NO_rdtase_flvorubredoxin"/>
</dbReference>
<dbReference type="InterPro" id="IPR008254">
    <property type="entry name" value="Flavodoxin/NO_synth"/>
</dbReference>
<dbReference type="InterPro" id="IPR029039">
    <property type="entry name" value="Flavoprotein-like_sf"/>
</dbReference>
<dbReference type="InterPro" id="IPR001279">
    <property type="entry name" value="Metallo-B-lactamas"/>
</dbReference>
<dbReference type="InterPro" id="IPR045761">
    <property type="entry name" value="ODP_dom"/>
</dbReference>
<dbReference type="InterPro" id="IPR036866">
    <property type="entry name" value="RibonucZ/Hydroxyglut_hydro"/>
</dbReference>
<dbReference type="InterPro" id="IPR024934">
    <property type="entry name" value="Rubredoxin-like_dom"/>
</dbReference>
<dbReference type="InterPro" id="IPR016440">
    <property type="entry name" value="Rubredoxin-O_OxRdtase"/>
</dbReference>
<dbReference type="InterPro" id="IPR024935">
    <property type="entry name" value="Rubredoxin_dom"/>
</dbReference>
<dbReference type="NCBIfam" id="NF003954">
    <property type="entry name" value="PRK05452.1"/>
    <property type="match status" value="1"/>
</dbReference>
<dbReference type="PANTHER" id="PTHR43717">
    <property type="entry name" value="ANAEROBIC NITRIC OXIDE REDUCTASE FLAVORUBREDOXIN"/>
    <property type="match status" value="1"/>
</dbReference>
<dbReference type="PANTHER" id="PTHR43717:SF1">
    <property type="entry name" value="ANAEROBIC NITRIC OXIDE REDUCTASE FLAVORUBREDOXIN"/>
    <property type="match status" value="1"/>
</dbReference>
<dbReference type="Pfam" id="PF00258">
    <property type="entry name" value="Flavodoxin_1"/>
    <property type="match status" value="1"/>
</dbReference>
<dbReference type="Pfam" id="PF19583">
    <property type="entry name" value="ODP"/>
    <property type="match status" value="1"/>
</dbReference>
<dbReference type="Pfam" id="PF00301">
    <property type="entry name" value="Rubredoxin"/>
    <property type="match status" value="1"/>
</dbReference>
<dbReference type="PIRSF" id="PIRSF005243">
    <property type="entry name" value="ROO"/>
    <property type="match status" value="1"/>
</dbReference>
<dbReference type="PRINTS" id="PR00163">
    <property type="entry name" value="RUBREDOXIN"/>
</dbReference>
<dbReference type="SMART" id="SM00849">
    <property type="entry name" value="Lactamase_B"/>
    <property type="match status" value="1"/>
</dbReference>
<dbReference type="SUPFAM" id="SSF52218">
    <property type="entry name" value="Flavoproteins"/>
    <property type="match status" value="1"/>
</dbReference>
<dbReference type="SUPFAM" id="SSF56281">
    <property type="entry name" value="Metallo-hydrolase/oxidoreductase"/>
    <property type="match status" value="1"/>
</dbReference>
<dbReference type="SUPFAM" id="SSF57802">
    <property type="entry name" value="Rubredoxin-like"/>
    <property type="match status" value="1"/>
</dbReference>
<dbReference type="PROSITE" id="PS50902">
    <property type="entry name" value="FLAVODOXIN_LIKE"/>
    <property type="match status" value="1"/>
</dbReference>
<dbReference type="PROSITE" id="PS50903">
    <property type="entry name" value="RUBREDOXIN_LIKE"/>
    <property type="match status" value="1"/>
</dbReference>
<feature type="chain" id="PRO_0000216790" description="Anaerobic nitric oxide reductase flavorubredoxin">
    <location>
        <begin position="1"/>
        <end position="479"/>
    </location>
</feature>
<feature type="domain" description="Flavodoxin-like" evidence="1">
    <location>
        <begin position="254"/>
        <end position="393"/>
    </location>
</feature>
<feature type="domain" description="Rubredoxin-like" evidence="1">
    <location>
        <begin position="423"/>
        <end position="474"/>
    </location>
</feature>
<feature type="region of interest" description="Zinc metallo-hydrolase">
    <location>
        <begin position="30"/>
        <end position="210"/>
    </location>
</feature>
<feature type="binding site" evidence="1">
    <location>
        <position position="79"/>
    </location>
    <ligand>
        <name>Fe cation</name>
        <dbReference type="ChEBI" id="CHEBI:24875"/>
        <label>1</label>
    </ligand>
</feature>
<feature type="binding site" evidence="1">
    <location>
        <position position="81"/>
    </location>
    <ligand>
        <name>Fe cation</name>
        <dbReference type="ChEBI" id="CHEBI:24875"/>
        <label>1</label>
    </ligand>
</feature>
<feature type="binding site" evidence="1">
    <location>
        <position position="83"/>
    </location>
    <ligand>
        <name>Fe cation</name>
        <dbReference type="ChEBI" id="CHEBI:24875"/>
        <label>2</label>
    </ligand>
</feature>
<feature type="binding site" evidence="1">
    <location>
        <position position="147"/>
    </location>
    <ligand>
        <name>Fe cation</name>
        <dbReference type="ChEBI" id="CHEBI:24875"/>
        <label>1</label>
    </ligand>
</feature>
<feature type="binding site" evidence="1">
    <location>
        <position position="166"/>
    </location>
    <ligand>
        <name>Fe cation</name>
        <dbReference type="ChEBI" id="CHEBI:24875"/>
        <label>1</label>
    </ligand>
</feature>
<feature type="binding site" evidence="1">
    <location>
        <position position="166"/>
    </location>
    <ligand>
        <name>Fe cation</name>
        <dbReference type="ChEBI" id="CHEBI:24875"/>
        <label>2</label>
    </ligand>
</feature>
<feature type="binding site" evidence="1">
    <location>
        <position position="227"/>
    </location>
    <ligand>
        <name>Fe cation</name>
        <dbReference type="ChEBI" id="CHEBI:24875"/>
        <label>2</label>
    </ligand>
</feature>
<feature type="binding site" evidence="1">
    <location>
        <begin position="260"/>
        <end position="264"/>
    </location>
    <ligand>
        <name>FMN</name>
        <dbReference type="ChEBI" id="CHEBI:58210"/>
    </ligand>
</feature>
<feature type="binding site" evidence="1">
    <location>
        <begin position="342"/>
        <end position="369"/>
    </location>
    <ligand>
        <name>FMN</name>
        <dbReference type="ChEBI" id="CHEBI:58210"/>
    </ligand>
</feature>
<feature type="binding site" evidence="1">
    <location>
        <position position="428"/>
    </location>
    <ligand>
        <name>Fe cation</name>
        <dbReference type="ChEBI" id="CHEBI:24875"/>
        <label>3</label>
    </ligand>
</feature>
<feature type="binding site" evidence="1">
    <location>
        <position position="431"/>
    </location>
    <ligand>
        <name>Fe cation</name>
        <dbReference type="ChEBI" id="CHEBI:24875"/>
        <label>3</label>
    </ligand>
</feature>
<feature type="binding site" evidence="1">
    <location>
        <position position="461"/>
    </location>
    <ligand>
        <name>Fe cation</name>
        <dbReference type="ChEBI" id="CHEBI:24875"/>
        <label>3</label>
    </ligand>
</feature>
<feature type="binding site" evidence="1">
    <location>
        <position position="464"/>
    </location>
    <ligand>
        <name>Fe cation</name>
        <dbReference type="ChEBI" id="CHEBI:24875"/>
        <label>3</label>
    </ligand>
</feature>
<organism>
    <name type="scientific">Shigella flexneri</name>
    <dbReference type="NCBI Taxonomy" id="623"/>
    <lineage>
        <taxon>Bacteria</taxon>
        <taxon>Pseudomonadati</taxon>
        <taxon>Pseudomonadota</taxon>
        <taxon>Gammaproteobacteria</taxon>
        <taxon>Enterobacterales</taxon>
        <taxon>Enterobacteriaceae</taxon>
        <taxon>Shigella</taxon>
    </lineage>
</organism>
<sequence>MSIVVKNNIHWVGQRDWEVRDFHGTEYKTLRGSSYNSYLIREEKNVLIDTVDHKFSREFVQNLRNEIDLADIDYIVINHAEEDHAGALTELMAQIPDTPIYCTANAIDSINGHHHHPEWNFNVVKTGDTLDIGNGKQLIFVETPMLHWPDSMMTYLTGDAVLFSNDAFGQHYCDEHLFNDEVDQTELFEQCQRYYANILTPFSRLVTPKITEILGFNLPVDMIATSHGVVWRDNPTQIVELYLKWAADYQEDRITIFYDTMSNNTRMMADAIAQGIAETDPRVAVKIFNVARSDKNEILTNVFRSKGVLVGTSTMNNVMMPKIAGLVEEMTGLRFRNKRASAFGSHGWSGGAMDRLSTRLQDAGFEMSLSLKAKWRPDQDALELCREHGREIARQWALAPLPQSTVNTVVKEETSATTTADLGPRMQCSVCQWIYDPAKGEPMQDVAPGTPWSEVPDNFLCPECSLGKDVFDELASEAK</sequence>
<name>NORV_SHIFL</name>